<name>DPOL_HBVD2</name>
<evidence type="ECO:0000255" key="1">
    <source>
        <dbReference type="HAMAP-Rule" id="MF_04073"/>
    </source>
</evidence>
<evidence type="ECO:0000256" key="2">
    <source>
        <dbReference type="SAM" id="MobiDB-lite"/>
    </source>
</evidence>
<organismHost>
    <name type="scientific">Homo sapiens</name>
    <name type="common">Human</name>
    <dbReference type="NCBI Taxonomy" id="9606"/>
</organismHost>
<organismHost>
    <name type="scientific">Pan troglodytes</name>
    <name type="common">Chimpanzee</name>
    <dbReference type="NCBI Taxonomy" id="9598"/>
</organismHost>
<reference key="1">
    <citation type="journal article" date="1990" name="Virology">
        <title>Active hepatitis B virus replication in the presence of anti-HBe is associated with viral variants containing an inactive pre-C region.</title>
        <authorList>
            <person name="Tong S."/>
            <person name="Li J."/>
            <person name="Vitvitski L."/>
            <person name="Trepo C."/>
        </authorList>
    </citation>
    <scope>NUCLEOTIDE SEQUENCE [GENOMIC DNA]</scope>
</reference>
<reference key="2">
    <citation type="journal article" date="2007" name="World J. Gastroenterol.">
        <title>Hepatitis B virus replication.</title>
        <authorList>
            <person name="Beck J."/>
            <person name="Nassal M."/>
        </authorList>
    </citation>
    <scope>REVIEW</scope>
</reference>
<proteinExistence type="inferred from homology"/>
<dbReference type="EC" id="2.7.7.7" evidence="1"/>
<dbReference type="EC" id="2.7.7.49" evidence="1"/>
<dbReference type="EC" id="3.1.26.4" evidence="1"/>
<dbReference type="EMBL" id="M32138">
    <property type="protein sequence ID" value="AAA45503.1"/>
    <property type="molecule type" value="Genomic_DNA"/>
</dbReference>
<dbReference type="PIR" id="C34773">
    <property type="entry name" value="JDVLA1"/>
</dbReference>
<dbReference type="DrugBank" id="DB13868">
    <property type="generic name" value="Adefovir"/>
</dbReference>
<dbReference type="DrugBank" id="DB00718">
    <property type="generic name" value="Adefovir dipivoxil"/>
</dbReference>
<dbReference type="DrugBank" id="DB00300">
    <property type="generic name" value="Tenofovir disoproxil"/>
</dbReference>
<dbReference type="Proteomes" id="UP000007929">
    <property type="component" value="Segment"/>
</dbReference>
<dbReference type="GO" id="GO:0003677">
    <property type="term" value="F:DNA binding"/>
    <property type="evidence" value="ECO:0007669"/>
    <property type="project" value="UniProtKB-UniRule"/>
</dbReference>
<dbReference type="GO" id="GO:0003887">
    <property type="term" value="F:DNA-directed DNA polymerase activity"/>
    <property type="evidence" value="ECO:0007669"/>
    <property type="project" value="UniProtKB-UniRule"/>
</dbReference>
<dbReference type="GO" id="GO:0046872">
    <property type="term" value="F:metal ion binding"/>
    <property type="evidence" value="ECO:0007669"/>
    <property type="project" value="UniProtKB-UniRule"/>
</dbReference>
<dbReference type="GO" id="GO:0003964">
    <property type="term" value="F:RNA-directed DNA polymerase activity"/>
    <property type="evidence" value="ECO:0007669"/>
    <property type="project" value="UniProtKB-UniRule"/>
</dbReference>
<dbReference type="GO" id="GO:0004523">
    <property type="term" value="F:RNA-DNA hybrid ribonuclease activity"/>
    <property type="evidence" value="ECO:0007669"/>
    <property type="project" value="UniProtKB-UniRule"/>
</dbReference>
<dbReference type="GO" id="GO:0006260">
    <property type="term" value="P:DNA replication"/>
    <property type="evidence" value="ECO:0007669"/>
    <property type="project" value="UniProtKB-UniRule"/>
</dbReference>
<dbReference type="GO" id="GO:0052170">
    <property type="term" value="P:symbiont-mediated suppression of host innate immune response"/>
    <property type="evidence" value="ECO:0007669"/>
    <property type="project" value="UniProtKB-UniRule"/>
</dbReference>
<dbReference type="FunFam" id="3.30.70.270:FF:000009">
    <property type="entry name" value="Protein P"/>
    <property type="match status" value="1"/>
</dbReference>
<dbReference type="Gene3D" id="3.30.70.270">
    <property type="match status" value="1"/>
</dbReference>
<dbReference type="HAMAP" id="MF_04073">
    <property type="entry name" value="HBV_DPOL"/>
    <property type="match status" value="1"/>
</dbReference>
<dbReference type="InterPro" id="IPR043502">
    <property type="entry name" value="DNA/RNA_pol_sf"/>
</dbReference>
<dbReference type="InterPro" id="IPR001462">
    <property type="entry name" value="DNApol_viral_C"/>
</dbReference>
<dbReference type="InterPro" id="IPR000201">
    <property type="entry name" value="DNApol_viral_N"/>
</dbReference>
<dbReference type="InterPro" id="IPR037531">
    <property type="entry name" value="HBV_DPOL"/>
</dbReference>
<dbReference type="InterPro" id="IPR043128">
    <property type="entry name" value="Rev_trsase/Diguanyl_cyclase"/>
</dbReference>
<dbReference type="InterPro" id="IPR000477">
    <property type="entry name" value="RT_dom"/>
</dbReference>
<dbReference type="InterPro" id="IPR051320">
    <property type="entry name" value="Viral_Replic_Matur_Polypro"/>
</dbReference>
<dbReference type="PANTHER" id="PTHR33064:SF29">
    <property type="entry name" value="PEPTIDASE A2 DOMAIN-CONTAINING PROTEIN-RELATED"/>
    <property type="match status" value="1"/>
</dbReference>
<dbReference type="PANTHER" id="PTHR33064">
    <property type="entry name" value="POL PROTEIN"/>
    <property type="match status" value="1"/>
</dbReference>
<dbReference type="Pfam" id="PF00336">
    <property type="entry name" value="DNA_pol_viral_C"/>
    <property type="match status" value="1"/>
</dbReference>
<dbReference type="Pfam" id="PF00242">
    <property type="entry name" value="DNA_pol_viral_N"/>
    <property type="match status" value="1"/>
</dbReference>
<dbReference type="Pfam" id="PF00078">
    <property type="entry name" value="RVT_1"/>
    <property type="match status" value="1"/>
</dbReference>
<dbReference type="SUPFAM" id="SSF56672">
    <property type="entry name" value="DNA/RNA polymerases"/>
    <property type="match status" value="1"/>
</dbReference>
<dbReference type="PROSITE" id="PS50878">
    <property type="entry name" value="RT_POL"/>
    <property type="match status" value="1"/>
</dbReference>
<comment type="function">
    <text evidence="1">Multifunctional enzyme that converts the viral RNA genome into dsDNA in viral cytoplasmic capsids. This enzyme displays a DNA polymerase activity that can copy either DNA or RNA templates, and a ribonuclease H (RNase H) activity that cleaves the RNA strand of RNA-DNA heteroduplexes in a partially processive 3'- to 5'-endonucleasic mode. Neo-synthesized pregenomic RNA (pgRNA) are encapsidated together with the P protein, and reverse-transcribed inside the nucleocapsid. Initiation of reverse-transcription occurs first by binding the epsilon loop on the pgRNA genome, and is initiated by protein priming, thereby the 5'-end of (-)DNA is covalently linked to P protein. Partial (+)DNA is synthesized from the (-)DNA template and generates the relaxed circular DNA (RC-DNA) genome. After budding and infection, the RC-DNA migrates in the nucleus, and is converted into a plasmid-like covalently closed circular DNA (cccDNA). The activity of P protein does not seem to be necessary for cccDNA generation, and is presumably released from (+)DNA by host nuclear DNA repair machinery.</text>
</comment>
<comment type="catalytic activity">
    <reaction evidence="1">
        <text>DNA(n) + a 2'-deoxyribonucleoside 5'-triphosphate = DNA(n+1) + diphosphate</text>
        <dbReference type="Rhea" id="RHEA:22508"/>
        <dbReference type="Rhea" id="RHEA-COMP:17339"/>
        <dbReference type="Rhea" id="RHEA-COMP:17340"/>
        <dbReference type="ChEBI" id="CHEBI:33019"/>
        <dbReference type="ChEBI" id="CHEBI:61560"/>
        <dbReference type="ChEBI" id="CHEBI:173112"/>
        <dbReference type="EC" id="2.7.7.7"/>
    </reaction>
</comment>
<comment type="catalytic activity">
    <reaction evidence="1">
        <text>DNA(n) + a 2'-deoxyribonucleoside 5'-triphosphate = DNA(n+1) + diphosphate</text>
        <dbReference type="Rhea" id="RHEA:22508"/>
        <dbReference type="Rhea" id="RHEA-COMP:17339"/>
        <dbReference type="Rhea" id="RHEA-COMP:17340"/>
        <dbReference type="ChEBI" id="CHEBI:33019"/>
        <dbReference type="ChEBI" id="CHEBI:61560"/>
        <dbReference type="ChEBI" id="CHEBI:173112"/>
        <dbReference type="EC" id="2.7.7.49"/>
    </reaction>
</comment>
<comment type="catalytic activity">
    <reaction evidence="1">
        <text>Endonucleolytic cleavage to 5'-phosphomonoester.</text>
        <dbReference type="EC" id="3.1.26.4"/>
    </reaction>
</comment>
<comment type="activity regulation">
    <text evidence="1">Activated by host HSP70 and HSP40 in vitro to be able to bind the epsilon loop of the pgRNA. Because deletion of the RNase H region renders the protein partly chaperone-independent, the chaperones may be needed indirectly to relieve occlusion of the RNA-binding site by this domain. Inhibited by several reverse-transcriptase inhibitors: Lamivudine, Adefovir and Entecavir.</text>
</comment>
<comment type="domain">
    <text evidence="1">Terminal protein domain (TP) is hepadnavirus-specific. Spacer domain is highly variable and separates the TP and RT domains. Polymerase/reverse-transcriptase domain (RT) and ribonuclease H domain (RH) are similar to retrovirus reverse transcriptase/RNase H.</text>
</comment>
<comment type="domain">
    <text evidence="1">The polymerase/reverse transcriptase (RT) and ribonuclease H (RH) domains are structured in five subdomains: finger, palm, thumb, connection and RNase H. Within the palm subdomain, the 'primer grip' region is thought to be involved in the positioning of the primer terminus for accommodating the incoming nucleotide. The RH domain stabilizes the association of RT with primer-template.</text>
</comment>
<comment type="miscellaneous">
    <text evidence="1">Hepadnaviral virions contain probably just one P protein molecule per particle.</text>
</comment>
<comment type="similarity">
    <text evidence="1">Belongs to the hepadnaviridae P protein family.</text>
</comment>
<organism>
    <name type="scientific">Hepatitis B virus genotype D (isolate France/alpha1/1989)</name>
    <name type="common">HBV-D</name>
    <dbReference type="NCBI Taxonomy" id="10411"/>
    <lineage>
        <taxon>Viruses</taxon>
        <taxon>Riboviria</taxon>
        <taxon>Pararnavirae</taxon>
        <taxon>Artverviricota</taxon>
        <taxon>Revtraviricetes</taxon>
        <taxon>Blubervirales</taxon>
        <taxon>Hepadnaviridae</taxon>
        <taxon>Orthohepadnavirus</taxon>
        <taxon>Hepatitis B virus</taxon>
    </lineage>
</organism>
<gene>
    <name evidence="1" type="primary">P</name>
</gene>
<sequence>MPLSYQHFRRLLLLDDEAGPLEEELPRLADEGLNRHVAEELNLGNLNVSIPWTHKVGNFTGLYSSTVPVFNPHWKTPSFPNIHLHQDIIKKCEQFVGPLTVNEKRRLQLIMPARFYPKVTKYLPLDKGIKPYYPEHLVNHYFQTRHYLHTLWKAGVLYKRETTHSASFCGSPYSWEQELQHGAESFHQQSSGILSRPPVGSSLQSKHCKSRLGLQSQQGLLARRQQGRSWSIRAGIHPTARRPFGVEPSGSGHTTNLASKSASCLHQSPVRKATYPSVSTFEKHSSSGHAVELHNLPPNSARSQSERPVSPCWWLQFRNSKPCSDYCLSHIVNLLEDWGPCAEHGEHHIRIPRTPARVTGGVFLVDKNPHNTEESRLVVDFSQFSRGNHRVSWPKFAVPNLQSLTNLLSSNLSWLSLDVSAAFYHLPLHPAAMPHLLVGSSGLSRYVARLSSDSRIFNHQHGTMQNLHDSCSRNLYVSLLLLYQTFGRKLHLYSHPIILGFRKIPMGVGLSPFLLAQFTSAICSVVRRAFPHCLAFSYMDDVVLGAKTVHHLESLFTAVTNFLLSLGIHLNPNKTKRWGYSLHFMGYVIGCYGSLPQDHIIQKIKECFRKLPVNRPIDWKVCQRIVGLLGFAAPFTQCGYPALMPLYACIQSKQAFTFSPTYKAFLCKQYLNLYPVARQRPGLCQVFADATPTGWGLVMGHQRMRGTFQAPLPIHTAELLAACFARSRSGANILGTDNSVVLSRKYTSFPWLLGCAANWILRGTSFVYVPSALNPADDPSRGRLGLSRPLLRLPFRPTTGRTSLYADSPSVPSHLPDRVHFASPLHVAWRPP</sequence>
<protein>
    <recommendedName>
        <fullName evidence="1">Protein P</fullName>
    </recommendedName>
    <domain>
        <recommendedName>
            <fullName evidence="1">DNA-directed DNA polymerase</fullName>
            <ecNumber evidence="1">2.7.7.7</ecNumber>
        </recommendedName>
    </domain>
    <domain>
        <recommendedName>
            <fullName evidence="1">RNA-directed DNA polymerase</fullName>
            <ecNumber evidence="1">2.7.7.49</ecNumber>
        </recommendedName>
    </domain>
    <domain>
        <recommendedName>
            <fullName evidence="1">Ribonuclease H</fullName>
            <ecNumber evidence="1">3.1.26.4</ecNumber>
        </recommendedName>
    </domain>
</protein>
<feature type="chain" id="PRO_0000222335" description="Protein P">
    <location>
        <begin position="1"/>
        <end position="832"/>
    </location>
</feature>
<feature type="domain" description="Reverse transcriptase" evidence="1">
    <location>
        <begin position="346"/>
        <end position="589"/>
    </location>
</feature>
<feature type="region of interest" description="Terminal protein domain (TP)" evidence="1">
    <location>
        <begin position="1"/>
        <end position="177"/>
    </location>
</feature>
<feature type="region of interest" description="Spacer" evidence="1">
    <location>
        <begin position="178"/>
        <end position="335"/>
    </location>
</feature>
<feature type="region of interest" description="Disordered" evidence="2">
    <location>
        <begin position="241"/>
        <end position="263"/>
    </location>
</feature>
<feature type="region of interest" description="Polymerase/reverse transcriptase domain (RT)" evidence="1">
    <location>
        <begin position="336"/>
        <end position="679"/>
    </location>
</feature>
<feature type="compositionally biased region" description="Polar residues" evidence="2">
    <location>
        <begin position="251"/>
        <end position="263"/>
    </location>
</feature>
<feature type="binding site" evidence="1">
    <location>
        <position position="418"/>
    </location>
    <ligand>
        <name>Mg(2+)</name>
        <dbReference type="ChEBI" id="CHEBI:18420"/>
        <note>catalytic</note>
    </ligand>
</feature>
<feature type="binding site" evidence="1">
    <location>
        <position position="540"/>
    </location>
    <ligand>
        <name>Mg(2+)</name>
        <dbReference type="ChEBI" id="CHEBI:18420"/>
        <note>catalytic</note>
    </ligand>
</feature>
<feature type="binding site" evidence="1">
    <location>
        <position position="541"/>
    </location>
    <ligand>
        <name>Mg(2+)</name>
        <dbReference type="ChEBI" id="CHEBI:18420"/>
        <note>catalytic</note>
    </ligand>
</feature>
<feature type="site" description="Priming of reverse-transcription by covalently linking the first nucleotide of the (-)DNA" evidence="1">
    <location>
        <position position="63"/>
    </location>
</feature>
<accession>P24024</accession>
<keyword id="KW-0235">DNA replication</keyword>
<keyword id="KW-0238">DNA-binding</keyword>
<keyword id="KW-0239">DNA-directed DNA polymerase</keyword>
<keyword id="KW-0255">Endonuclease</keyword>
<keyword id="KW-0945">Host-virus interaction</keyword>
<keyword id="KW-0378">Hydrolase</keyword>
<keyword id="KW-1090">Inhibition of host innate immune response by virus</keyword>
<keyword id="KW-1113">Inhibition of host RLR pathway by virus</keyword>
<keyword id="KW-0460">Magnesium</keyword>
<keyword id="KW-0479">Metal-binding</keyword>
<keyword id="KW-0511">Multifunctional enzyme</keyword>
<keyword id="KW-0540">Nuclease</keyword>
<keyword id="KW-0548">Nucleotidyltransferase</keyword>
<keyword id="KW-0695">RNA-directed DNA polymerase</keyword>
<keyword id="KW-0808">Transferase</keyword>
<keyword id="KW-0899">Viral immunoevasion</keyword>